<protein>
    <recommendedName>
        <fullName evidence="1">UPF0386 protein YjhX</fullName>
    </recommendedName>
</protein>
<sequence>MNLSRQEQRTLHVLAKGGRITHIRDASGRVTAVECYSREGLLLADCTLAVFKKLKTKKLIKSVNGQPYRINTTGLNNVRAQPDNR</sequence>
<accession>B4TTB9</accession>
<proteinExistence type="inferred from homology"/>
<name>YJHX_SALSV</name>
<reference key="1">
    <citation type="journal article" date="2011" name="J. Bacteriol.">
        <title>Comparative genomics of 28 Salmonella enterica isolates: evidence for CRISPR-mediated adaptive sublineage evolution.</title>
        <authorList>
            <person name="Fricke W.F."/>
            <person name="Mammel M.K."/>
            <person name="McDermott P.F."/>
            <person name="Tartera C."/>
            <person name="White D.G."/>
            <person name="Leclerc J.E."/>
            <person name="Ravel J."/>
            <person name="Cebula T.A."/>
        </authorList>
    </citation>
    <scope>NUCLEOTIDE SEQUENCE [LARGE SCALE GENOMIC DNA]</scope>
    <source>
        <strain>CVM19633</strain>
    </source>
</reference>
<gene>
    <name evidence="1" type="primary">yjhX</name>
    <name type="ordered locus">SeSA_A4753</name>
</gene>
<comment type="similarity">
    <text evidence="1">Belongs to the UPF0386 family.</text>
</comment>
<dbReference type="EMBL" id="CP001127">
    <property type="protein sequence ID" value="ACF92527.1"/>
    <property type="molecule type" value="Genomic_DNA"/>
</dbReference>
<dbReference type="RefSeq" id="WP_001054380.1">
    <property type="nucleotide sequence ID" value="NC_011094.1"/>
</dbReference>
<dbReference type="KEGG" id="sew:SeSA_A4753"/>
<dbReference type="HOGENOM" id="CLU_164736_0_0_6"/>
<dbReference type="Proteomes" id="UP000001865">
    <property type="component" value="Chromosome"/>
</dbReference>
<dbReference type="HAMAP" id="MF_00827">
    <property type="entry name" value="UPF0386"/>
    <property type="match status" value="1"/>
</dbReference>
<dbReference type="InterPro" id="IPR018654">
    <property type="entry name" value="YjhX_toxin"/>
</dbReference>
<dbReference type="NCBIfam" id="NF010240">
    <property type="entry name" value="PRK13687.1"/>
    <property type="match status" value="1"/>
</dbReference>
<dbReference type="Pfam" id="PF09857">
    <property type="entry name" value="YjhX_toxin"/>
    <property type="match status" value="1"/>
</dbReference>
<feature type="chain" id="PRO_1000200713" description="UPF0386 protein YjhX">
    <location>
        <begin position="1"/>
        <end position="85"/>
    </location>
</feature>
<organism>
    <name type="scientific">Salmonella schwarzengrund (strain CVM19633)</name>
    <dbReference type="NCBI Taxonomy" id="439843"/>
    <lineage>
        <taxon>Bacteria</taxon>
        <taxon>Pseudomonadati</taxon>
        <taxon>Pseudomonadota</taxon>
        <taxon>Gammaproteobacteria</taxon>
        <taxon>Enterobacterales</taxon>
        <taxon>Enterobacteriaceae</taxon>
        <taxon>Salmonella</taxon>
    </lineage>
</organism>
<evidence type="ECO:0000255" key="1">
    <source>
        <dbReference type="HAMAP-Rule" id="MF_00827"/>
    </source>
</evidence>